<evidence type="ECO:0000255" key="1">
    <source>
        <dbReference type="HAMAP-Rule" id="MF_00540"/>
    </source>
</evidence>
<feature type="chain" id="PRO_1000128862" description="Adenosine deaminase">
    <location>
        <begin position="1"/>
        <end position="333"/>
    </location>
</feature>
<feature type="active site" description="Proton donor" evidence="1">
    <location>
        <position position="200"/>
    </location>
</feature>
<feature type="binding site" evidence="1">
    <location>
        <position position="12"/>
    </location>
    <ligand>
        <name>Zn(2+)</name>
        <dbReference type="ChEBI" id="CHEBI:29105"/>
        <note>catalytic</note>
    </ligand>
</feature>
<feature type="binding site" evidence="1">
    <location>
        <position position="14"/>
    </location>
    <ligand>
        <name>substrate</name>
    </ligand>
</feature>
<feature type="binding site" evidence="1">
    <location>
        <position position="14"/>
    </location>
    <ligand>
        <name>Zn(2+)</name>
        <dbReference type="ChEBI" id="CHEBI:29105"/>
        <note>catalytic</note>
    </ligand>
</feature>
<feature type="binding site" evidence="1">
    <location>
        <position position="16"/>
    </location>
    <ligand>
        <name>substrate</name>
    </ligand>
</feature>
<feature type="binding site" evidence="1">
    <location>
        <position position="170"/>
    </location>
    <ligand>
        <name>substrate</name>
    </ligand>
</feature>
<feature type="binding site" evidence="1">
    <location>
        <position position="197"/>
    </location>
    <ligand>
        <name>Zn(2+)</name>
        <dbReference type="ChEBI" id="CHEBI:29105"/>
        <note>catalytic</note>
    </ligand>
</feature>
<feature type="binding site" evidence="1">
    <location>
        <position position="278"/>
    </location>
    <ligand>
        <name>Zn(2+)</name>
        <dbReference type="ChEBI" id="CHEBI:29105"/>
        <note>catalytic</note>
    </ligand>
</feature>
<feature type="binding site" evidence="1">
    <location>
        <position position="279"/>
    </location>
    <ligand>
        <name>substrate</name>
    </ligand>
</feature>
<feature type="site" description="Important for catalytic activity" evidence="1">
    <location>
        <position position="221"/>
    </location>
</feature>
<proteinExistence type="inferred from homology"/>
<accession>B5QUG0</accession>
<dbReference type="EC" id="3.5.4.4" evidence="1"/>
<dbReference type="EMBL" id="AM933172">
    <property type="protein sequence ID" value="CAR33166.1"/>
    <property type="molecule type" value="Genomic_DNA"/>
</dbReference>
<dbReference type="RefSeq" id="WP_000565571.1">
    <property type="nucleotide sequence ID" value="NC_011294.1"/>
</dbReference>
<dbReference type="SMR" id="B5QUG0"/>
<dbReference type="KEGG" id="set:SEN1584"/>
<dbReference type="HOGENOM" id="CLU_039228_0_2_6"/>
<dbReference type="Proteomes" id="UP000000613">
    <property type="component" value="Chromosome"/>
</dbReference>
<dbReference type="GO" id="GO:0005829">
    <property type="term" value="C:cytosol"/>
    <property type="evidence" value="ECO:0007669"/>
    <property type="project" value="TreeGrafter"/>
</dbReference>
<dbReference type="GO" id="GO:0046936">
    <property type="term" value="F:2'-deoxyadenosine deaminase activity"/>
    <property type="evidence" value="ECO:0007669"/>
    <property type="project" value="RHEA"/>
</dbReference>
<dbReference type="GO" id="GO:0004000">
    <property type="term" value="F:adenosine deaminase activity"/>
    <property type="evidence" value="ECO:0007669"/>
    <property type="project" value="UniProtKB-UniRule"/>
</dbReference>
<dbReference type="GO" id="GO:0008270">
    <property type="term" value="F:zinc ion binding"/>
    <property type="evidence" value="ECO:0007669"/>
    <property type="project" value="UniProtKB-UniRule"/>
</dbReference>
<dbReference type="GO" id="GO:0006154">
    <property type="term" value="P:adenosine catabolic process"/>
    <property type="evidence" value="ECO:0007669"/>
    <property type="project" value="TreeGrafter"/>
</dbReference>
<dbReference type="GO" id="GO:0043103">
    <property type="term" value="P:hypoxanthine salvage"/>
    <property type="evidence" value="ECO:0007669"/>
    <property type="project" value="TreeGrafter"/>
</dbReference>
<dbReference type="GO" id="GO:0046103">
    <property type="term" value="P:inosine biosynthetic process"/>
    <property type="evidence" value="ECO:0007669"/>
    <property type="project" value="TreeGrafter"/>
</dbReference>
<dbReference type="GO" id="GO:0009117">
    <property type="term" value="P:nucleotide metabolic process"/>
    <property type="evidence" value="ECO:0007669"/>
    <property type="project" value="UniProtKB-KW"/>
</dbReference>
<dbReference type="GO" id="GO:0009168">
    <property type="term" value="P:purine ribonucleoside monophosphate biosynthetic process"/>
    <property type="evidence" value="ECO:0007669"/>
    <property type="project" value="UniProtKB-UniRule"/>
</dbReference>
<dbReference type="CDD" id="cd01320">
    <property type="entry name" value="ADA"/>
    <property type="match status" value="1"/>
</dbReference>
<dbReference type="FunFam" id="3.20.20.140:FF:000009">
    <property type="entry name" value="Adenosine deaminase"/>
    <property type="match status" value="1"/>
</dbReference>
<dbReference type="Gene3D" id="3.20.20.140">
    <property type="entry name" value="Metal-dependent hydrolases"/>
    <property type="match status" value="1"/>
</dbReference>
<dbReference type="HAMAP" id="MF_00540">
    <property type="entry name" value="A_deaminase"/>
    <property type="match status" value="1"/>
</dbReference>
<dbReference type="InterPro" id="IPR006650">
    <property type="entry name" value="A/AMP_deam_AS"/>
</dbReference>
<dbReference type="InterPro" id="IPR028893">
    <property type="entry name" value="A_deaminase"/>
</dbReference>
<dbReference type="InterPro" id="IPR001365">
    <property type="entry name" value="A_deaminase_dom"/>
</dbReference>
<dbReference type="InterPro" id="IPR006330">
    <property type="entry name" value="Ado/ade_deaminase"/>
</dbReference>
<dbReference type="InterPro" id="IPR032466">
    <property type="entry name" value="Metal_Hydrolase"/>
</dbReference>
<dbReference type="NCBIfam" id="TIGR01430">
    <property type="entry name" value="aden_deam"/>
    <property type="match status" value="1"/>
</dbReference>
<dbReference type="NCBIfam" id="NF006846">
    <property type="entry name" value="PRK09358.1-1"/>
    <property type="match status" value="1"/>
</dbReference>
<dbReference type="PANTHER" id="PTHR11409">
    <property type="entry name" value="ADENOSINE DEAMINASE"/>
    <property type="match status" value="1"/>
</dbReference>
<dbReference type="PANTHER" id="PTHR11409:SF43">
    <property type="entry name" value="ADENOSINE DEAMINASE"/>
    <property type="match status" value="1"/>
</dbReference>
<dbReference type="Pfam" id="PF00962">
    <property type="entry name" value="A_deaminase"/>
    <property type="match status" value="1"/>
</dbReference>
<dbReference type="SUPFAM" id="SSF51556">
    <property type="entry name" value="Metallo-dependent hydrolases"/>
    <property type="match status" value="1"/>
</dbReference>
<dbReference type="PROSITE" id="PS00485">
    <property type="entry name" value="A_DEAMINASE"/>
    <property type="match status" value="1"/>
</dbReference>
<gene>
    <name evidence="1" type="primary">add</name>
    <name type="ordered locus">SEN1584</name>
</gene>
<organism>
    <name type="scientific">Salmonella enteritidis PT4 (strain P125109)</name>
    <dbReference type="NCBI Taxonomy" id="550537"/>
    <lineage>
        <taxon>Bacteria</taxon>
        <taxon>Pseudomonadati</taxon>
        <taxon>Pseudomonadota</taxon>
        <taxon>Gammaproteobacteria</taxon>
        <taxon>Enterobacterales</taxon>
        <taxon>Enterobacteriaceae</taxon>
        <taxon>Salmonella</taxon>
    </lineage>
</organism>
<protein>
    <recommendedName>
        <fullName evidence="1">Adenosine deaminase</fullName>
        <ecNumber evidence="1">3.5.4.4</ecNumber>
    </recommendedName>
    <alternativeName>
        <fullName evidence="1">Adenosine aminohydrolase</fullName>
    </alternativeName>
</protein>
<sequence>MIDITLPLTDIHRHLDGNIRAQTILDLGRQFNIALPAQTLETLIPHVQVTSTEPDLVSFLTKLDWGVKVLASLDACRRVAFENIEDAARNGLHYVELRFSPGYMAMAHQLPIAGVVEAVIDGVRDGCNTFGVEARLIGIMSRTFGEAACLQELDALLAHRENITALDLAGDELGFPGSLFLSHFNRARDAGWHITVHAGEAAGPESIWQAIRELGAERIGHGVKAVEDRALMDFLVQQRIGIESCLTSNIQTSTVASLADHPLKTFLEHGVLASLNTDDPAVQGVDIIHEYHVAAPAAGLSREQIRQAQINGLEIAFLSDGEKRALREKVAAA</sequence>
<comment type="function">
    <text evidence="1">Catalyzes the hydrolytic deamination of adenosine and 2-deoxyadenosine.</text>
</comment>
<comment type="catalytic activity">
    <reaction evidence="1">
        <text>adenosine + H2O + H(+) = inosine + NH4(+)</text>
        <dbReference type="Rhea" id="RHEA:24408"/>
        <dbReference type="ChEBI" id="CHEBI:15377"/>
        <dbReference type="ChEBI" id="CHEBI:15378"/>
        <dbReference type="ChEBI" id="CHEBI:16335"/>
        <dbReference type="ChEBI" id="CHEBI:17596"/>
        <dbReference type="ChEBI" id="CHEBI:28938"/>
        <dbReference type="EC" id="3.5.4.4"/>
    </reaction>
    <physiologicalReaction direction="left-to-right" evidence="1">
        <dbReference type="Rhea" id="RHEA:24409"/>
    </physiologicalReaction>
</comment>
<comment type="catalytic activity">
    <reaction evidence="1">
        <text>2'-deoxyadenosine + H2O + H(+) = 2'-deoxyinosine + NH4(+)</text>
        <dbReference type="Rhea" id="RHEA:28190"/>
        <dbReference type="ChEBI" id="CHEBI:15377"/>
        <dbReference type="ChEBI" id="CHEBI:15378"/>
        <dbReference type="ChEBI" id="CHEBI:17256"/>
        <dbReference type="ChEBI" id="CHEBI:28938"/>
        <dbReference type="ChEBI" id="CHEBI:28997"/>
        <dbReference type="EC" id="3.5.4.4"/>
    </reaction>
    <physiologicalReaction direction="left-to-right" evidence="1">
        <dbReference type="Rhea" id="RHEA:28191"/>
    </physiologicalReaction>
</comment>
<comment type="cofactor">
    <cofactor evidence="1">
        <name>Zn(2+)</name>
        <dbReference type="ChEBI" id="CHEBI:29105"/>
    </cofactor>
    <text evidence="1">Binds 1 zinc ion per subunit.</text>
</comment>
<comment type="similarity">
    <text evidence="1">Belongs to the metallo-dependent hydrolases superfamily. Adenosine and AMP deaminases family. Adenosine deaminase subfamily.</text>
</comment>
<keyword id="KW-0378">Hydrolase</keyword>
<keyword id="KW-0479">Metal-binding</keyword>
<keyword id="KW-0546">Nucleotide metabolism</keyword>
<keyword id="KW-0862">Zinc</keyword>
<reference key="1">
    <citation type="journal article" date="2008" name="Genome Res.">
        <title>Comparative genome analysis of Salmonella enteritidis PT4 and Salmonella gallinarum 287/91 provides insights into evolutionary and host adaptation pathways.</title>
        <authorList>
            <person name="Thomson N.R."/>
            <person name="Clayton D.J."/>
            <person name="Windhorst D."/>
            <person name="Vernikos G."/>
            <person name="Davidson S."/>
            <person name="Churcher C."/>
            <person name="Quail M.A."/>
            <person name="Stevens M."/>
            <person name="Jones M.A."/>
            <person name="Watson M."/>
            <person name="Barron A."/>
            <person name="Layton A."/>
            <person name="Pickard D."/>
            <person name="Kingsley R.A."/>
            <person name="Bignell A."/>
            <person name="Clark L."/>
            <person name="Harris B."/>
            <person name="Ormond D."/>
            <person name="Abdellah Z."/>
            <person name="Brooks K."/>
            <person name="Cherevach I."/>
            <person name="Chillingworth T."/>
            <person name="Woodward J."/>
            <person name="Norberczak H."/>
            <person name="Lord A."/>
            <person name="Arrowsmith C."/>
            <person name="Jagels K."/>
            <person name="Moule S."/>
            <person name="Mungall K."/>
            <person name="Saunders M."/>
            <person name="Whitehead S."/>
            <person name="Chabalgoity J.A."/>
            <person name="Maskell D."/>
            <person name="Humphreys T."/>
            <person name="Roberts M."/>
            <person name="Barrow P.A."/>
            <person name="Dougan G."/>
            <person name="Parkhill J."/>
        </authorList>
    </citation>
    <scope>NUCLEOTIDE SEQUENCE [LARGE SCALE GENOMIC DNA]</scope>
    <source>
        <strain>P125109</strain>
    </source>
</reference>
<name>ADD_SALEP</name>